<evidence type="ECO:0000255" key="1">
    <source>
        <dbReference type="HAMAP-Rule" id="MF_01058"/>
    </source>
</evidence>
<evidence type="ECO:0000256" key="2">
    <source>
        <dbReference type="SAM" id="MobiDB-lite"/>
    </source>
</evidence>
<proteinExistence type="inferred from homology"/>
<feature type="chain" id="PRO_1000064426" description="Der GTPase-activating protein YihI">
    <location>
        <begin position="1"/>
        <end position="186"/>
    </location>
</feature>
<feature type="region of interest" description="Disordered" evidence="2">
    <location>
        <begin position="39"/>
        <end position="77"/>
    </location>
</feature>
<feature type="compositionally biased region" description="Basic and acidic residues" evidence="2">
    <location>
        <begin position="62"/>
        <end position="77"/>
    </location>
</feature>
<comment type="function">
    <text evidence="1">A GTPase-activating protein (GAP) that modifies Der/EngA GTPase function. May play a role in ribosome biogenesis.</text>
</comment>
<comment type="subunit">
    <text evidence="1">Interacts with Der.</text>
</comment>
<comment type="similarity">
    <text evidence="1">Belongs to the YihI family.</text>
</comment>
<accession>A5UE01</accession>
<organism>
    <name type="scientific">Haemophilus influenzae (strain PittEE)</name>
    <dbReference type="NCBI Taxonomy" id="374930"/>
    <lineage>
        <taxon>Bacteria</taxon>
        <taxon>Pseudomonadati</taxon>
        <taxon>Pseudomonadota</taxon>
        <taxon>Gammaproteobacteria</taxon>
        <taxon>Pasteurellales</taxon>
        <taxon>Pasteurellaceae</taxon>
        <taxon>Haemophilus</taxon>
    </lineage>
</organism>
<name>YIHI_HAEIE</name>
<protein>
    <recommendedName>
        <fullName evidence="1">Der GTPase-activating protein YihI</fullName>
    </recommendedName>
</protein>
<sequence>MARKKKTRRITDIMPIRKADKKIDITKARSGKKLTRYELDAKAREDKKKRKHKGLASGSRHSAVEEKANKLQNEIKDPKIGSKKKIPLVVEFVNKPEKGQVIPVIKQVKKQDPMKELENLENNEILNELLDALDAGKTISKSDQQFVDECLDRISELMEELGIEDEDESEDDLYRTFERMDINQFR</sequence>
<gene>
    <name evidence="1" type="primary">yihI</name>
    <name type="ordered locus">CGSHiEE_08505</name>
</gene>
<dbReference type="EMBL" id="CP000671">
    <property type="protein sequence ID" value="ABQ99002.1"/>
    <property type="molecule type" value="Genomic_DNA"/>
</dbReference>
<dbReference type="SMR" id="A5UE01"/>
<dbReference type="KEGG" id="hip:CGSHiEE_08505"/>
<dbReference type="HOGENOM" id="CLU_094104_2_0_6"/>
<dbReference type="GO" id="GO:0005096">
    <property type="term" value="F:GTPase activator activity"/>
    <property type="evidence" value="ECO:0007669"/>
    <property type="project" value="UniProtKB-KW"/>
</dbReference>
<dbReference type="GO" id="GO:0042254">
    <property type="term" value="P:ribosome biogenesis"/>
    <property type="evidence" value="ECO:0007669"/>
    <property type="project" value="UniProtKB-KW"/>
</dbReference>
<dbReference type="HAMAP" id="MF_01058">
    <property type="entry name" value="GAP_YihI"/>
    <property type="match status" value="1"/>
</dbReference>
<dbReference type="InterPro" id="IPR007336">
    <property type="entry name" value="YihI"/>
</dbReference>
<dbReference type="NCBIfam" id="NF003560">
    <property type="entry name" value="PRK05244.1-1"/>
    <property type="match status" value="1"/>
</dbReference>
<dbReference type="Pfam" id="PF04220">
    <property type="entry name" value="YihI"/>
    <property type="match status" value="1"/>
</dbReference>
<keyword id="KW-0343">GTPase activation</keyword>
<keyword id="KW-0690">Ribosome biogenesis</keyword>
<reference key="1">
    <citation type="journal article" date="2007" name="Genome Biol.">
        <title>Characterization and modeling of the Haemophilus influenzae core and supragenomes based on the complete genomic sequences of Rd and 12 clinical nontypeable strains.</title>
        <authorList>
            <person name="Hogg J.S."/>
            <person name="Hu F.Z."/>
            <person name="Janto B."/>
            <person name="Boissy R."/>
            <person name="Hayes J."/>
            <person name="Keefe R."/>
            <person name="Post J.C."/>
            <person name="Ehrlich G.D."/>
        </authorList>
    </citation>
    <scope>NUCLEOTIDE SEQUENCE [LARGE SCALE GENOMIC DNA]</scope>
    <source>
        <strain>PittEE</strain>
    </source>
</reference>